<reference key="1">
    <citation type="journal article" date="1992" name="Gene">
        <title>Ependymins from the cerebrospinal fluid of salmonid fish: gene structure and molecular characterization.</title>
        <authorList>
            <person name="Mueller-Schmid A."/>
            <person name="Rinder H."/>
            <person name="Lottspeich F."/>
            <person name="Gertzen E.-M."/>
            <person name="Hoffmann W."/>
        </authorList>
    </citation>
    <scope>NUCLEOTIDE SEQUENCE [MRNA]</scope>
    <scope>PROTEIN SEQUENCE OF 22-43</scope>
    <source>
        <tissue>Cerebrospinal fluid</tissue>
    </source>
</reference>
<keyword id="KW-0106">Calcium</keyword>
<keyword id="KW-0903">Direct protein sequencing</keyword>
<keyword id="KW-0325">Glycoprotein</keyword>
<keyword id="KW-0964">Secreted</keyword>
<keyword id="KW-0732">Signal</keyword>
<sequence>MQAFAVAALSIWLCLGATTLAESHGPQHCTSPNMTGVLTVLALTGGEIKATGHYSYDSTDKKIRFTESEMHLNKTEHLEDYLMLFEEGVFYDIDMKNQSCKKMSLHSHAHALELPAGAAHQVELFLGSDTVQEEDIKVNIWTGSVPETKGQYFLSTTVGECLPLSTFYSTDSITLLFSNSEVVTEVKAPEVFNLPSFCEGVELEEAPEGQKNDFFSLFNSV</sequence>
<protein>
    <recommendedName>
        <fullName>Ependymin-1</fullName>
    </recommendedName>
    <alternativeName>
        <fullName>Ependymin I</fullName>
        <shortName>EPD-I</shortName>
    </alternativeName>
</protein>
<proteinExistence type="evidence at protein level"/>
<name>EPD1_ONCMY</name>
<organism>
    <name type="scientific">Oncorhynchus mykiss</name>
    <name type="common">Rainbow trout</name>
    <name type="synonym">Salmo gairdneri</name>
    <dbReference type="NCBI Taxonomy" id="8022"/>
    <lineage>
        <taxon>Eukaryota</taxon>
        <taxon>Metazoa</taxon>
        <taxon>Chordata</taxon>
        <taxon>Craniata</taxon>
        <taxon>Vertebrata</taxon>
        <taxon>Euteleostomi</taxon>
        <taxon>Actinopterygii</taxon>
        <taxon>Neopterygii</taxon>
        <taxon>Teleostei</taxon>
        <taxon>Protacanthopterygii</taxon>
        <taxon>Salmoniformes</taxon>
        <taxon>Salmonidae</taxon>
        <taxon>Salmoninae</taxon>
        <taxon>Oncorhynchus</taxon>
    </lineage>
</organism>
<comment type="function">
    <text>May play a role in neural plasticity. May be involved during axon regeneration.</text>
</comment>
<comment type="subcellular location">
    <subcellularLocation>
        <location>Secreted</location>
    </subcellularLocation>
</comment>
<comment type="tissue specificity">
    <text>EPDs are synthesized in the meninx and secreted in the cerebrospinal fluid.</text>
</comment>
<comment type="PTM">
    <text>Binds calcium through the terminal sialic acids.</text>
</comment>
<comment type="similarity">
    <text evidence="3">Belongs to the ependymin family.</text>
</comment>
<dbReference type="EMBL" id="M93697">
    <property type="protein sequence ID" value="AAA49399.1"/>
    <property type="molecule type" value="mRNA"/>
</dbReference>
<dbReference type="PIR" id="JC1250">
    <property type="entry name" value="JC1250"/>
</dbReference>
<dbReference type="RefSeq" id="NP_001118165.1">
    <property type="nucleotide sequence ID" value="NM_001124693.1"/>
</dbReference>
<dbReference type="SMR" id="P28770"/>
<dbReference type="GlyCosmos" id="P28770">
    <property type="glycosylation" value="3 sites, No reported glycans"/>
</dbReference>
<dbReference type="GeneID" id="100136738"/>
<dbReference type="KEGG" id="omy:100136738"/>
<dbReference type="CTD" id="30199"/>
<dbReference type="OrthoDB" id="8872894at2759"/>
<dbReference type="Proteomes" id="UP000694395">
    <property type="component" value="Unplaced"/>
</dbReference>
<dbReference type="GO" id="GO:0005576">
    <property type="term" value="C:extracellular region"/>
    <property type="evidence" value="ECO:0007669"/>
    <property type="project" value="UniProtKB-SubCell"/>
</dbReference>
<dbReference type="GO" id="GO:0005764">
    <property type="term" value="C:lysosome"/>
    <property type="evidence" value="ECO:0007669"/>
    <property type="project" value="TreeGrafter"/>
</dbReference>
<dbReference type="GO" id="GO:0005509">
    <property type="term" value="F:calcium ion binding"/>
    <property type="evidence" value="ECO:0007669"/>
    <property type="project" value="InterPro"/>
</dbReference>
<dbReference type="GO" id="GO:0007160">
    <property type="term" value="P:cell-matrix adhesion"/>
    <property type="evidence" value="ECO:0007669"/>
    <property type="project" value="InterPro"/>
</dbReference>
<dbReference type="InterPro" id="IPR001299">
    <property type="entry name" value="Ependymin"/>
</dbReference>
<dbReference type="InterPro" id="IPR018224">
    <property type="entry name" value="Ependymin_CS"/>
</dbReference>
<dbReference type="PANTHER" id="PTHR10697:SF5">
    <property type="entry name" value="EPENDYMIN-RELATED"/>
    <property type="match status" value="1"/>
</dbReference>
<dbReference type="PANTHER" id="PTHR10697">
    <property type="entry name" value="MAMMALIAN EPENDYMIN-RELATED PROTEIN 1"/>
    <property type="match status" value="1"/>
</dbReference>
<dbReference type="Pfam" id="PF00811">
    <property type="entry name" value="Ependymin"/>
    <property type="match status" value="1"/>
</dbReference>
<dbReference type="PRINTS" id="PR00317">
    <property type="entry name" value="EPENDYMIN"/>
</dbReference>
<dbReference type="SMART" id="SM00026">
    <property type="entry name" value="EPEND"/>
    <property type="match status" value="1"/>
</dbReference>
<dbReference type="PROSITE" id="PS00898">
    <property type="entry name" value="EPENDYMIN_1"/>
    <property type="match status" value="1"/>
</dbReference>
<dbReference type="PROSITE" id="PS00899">
    <property type="entry name" value="EPENDYMIN_2"/>
    <property type="match status" value="1"/>
</dbReference>
<feature type="signal peptide" evidence="2">
    <location>
        <begin position="1"/>
        <end position="21"/>
    </location>
</feature>
<feature type="chain" id="PRO_0000008348" description="Ependymin-1">
    <location>
        <begin position="22"/>
        <end position="221"/>
    </location>
</feature>
<feature type="glycosylation site" description="N-linked (GlcNAc...) asparagine" evidence="1">
    <location>
        <position position="33"/>
    </location>
</feature>
<feature type="glycosylation site" description="N-linked (GlcNAc...) asparagine" evidence="1">
    <location>
        <position position="73"/>
    </location>
</feature>
<feature type="glycosylation site" description="N-linked (GlcNAc...) asparagine" evidence="1">
    <location>
        <position position="97"/>
    </location>
</feature>
<gene>
    <name type="primary">epd1</name>
</gene>
<accession>P28770</accession>
<evidence type="ECO:0000255" key="1"/>
<evidence type="ECO:0000269" key="2">
    <source>
    </source>
</evidence>
<evidence type="ECO:0000305" key="3"/>